<protein>
    <recommendedName>
        <fullName evidence="1">dCTP deaminase</fullName>
        <ecNumber evidence="1">3.5.4.13</ecNumber>
    </recommendedName>
    <alternativeName>
        <fullName evidence="1">Deoxycytidine triphosphate deaminase</fullName>
    </alternativeName>
</protein>
<proteinExistence type="inferred from homology"/>
<name>DCD_HELP2</name>
<sequence>MGLKADSWIKKMSLEHGMISPFCEKQVGKNVISYGLSSYGYDIRVGSEFMLFDNKNALIDPKNFDPNNATKIDASKEGYFILPANAFALAHTIEYFKMPKDTLAICLGKSTYARCGIIVNVTPFEPEFEGYITIEISNTTNLPAKVYANEGIAQVVFLQGDEMCEQSYKDRGGKYQGQVGITLPKILK</sequence>
<comment type="function">
    <text evidence="1">Catalyzes the deamination of dCTP to dUTP.</text>
</comment>
<comment type="catalytic activity">
    <reaction evidence="1">
        <text>dCTP + H2O + H(+) = dUTP + NH4(+)</text>
        <dbReference type="Rhea" id="RHEA:22680"/>
        <dbReference type="ChEBI" id="CHEBI:15377"/>
        <dbReference type="ChEBI" id="CHEBI:15378"/>
        <dbReference type="ChEBI" id="CHEBI:28938"/>
        <dbReference type="ChEBI" id="CHEBI:61481"/>
        <dbReference type="ChEBI" id="CHEBI:61555"/>
        <dbReference type="EC" id="3.5.4.13"/>
    </reaction>
</comment>
<comment type="pathway">
    <text evidence="1">Pyrimidine metabolism; dUMP biosynthesis; dUMP from dCTP (dUTP route): step 1/2.</text>
</comment>
<comment type="subunit">
    <text evidence="1">Homotrimer.</text>
</comment>
<comment type="similarity">
    <text evidence="1">Belongs to the dCTP deaminase family.</text>
</comment>
<organism>
    <name type="scientific">Helicobacter pylori (strain P12)</name>
    <dbReference type="NCBI Taxonomy" id="570508"/>
    <lineage>
        <taxon>Bacteria</taxon>
        <taxon>Pseudomonadati</taxon>
        <taxon>Campylobacterota</taxon>
        <taxon>Epsilonproteobacteria</taxon>
        <taxon>Campylobacterales</taxon>
        <taxon>Helicobacteraceae</taxon>
        <taxon>Helicobacter</taxon>
    </lineage>
</organism>
<feature type="chain" id="PRO_1000096429" description="dCTP deaminase">
    <location>
        <begin position="1"/>
        <end position="188"/>
    </location>
</feature>
<feature type="active site" description="Proton donor/acceptor" evidence="1">
    <location>
        <position position="135"/>
    </location>
</feature>
<feature type="binding site" evidence="1">
    <location>
        <begin position="109"/>
        <end position="114"/>
    </location>
    <ligand>
        <name>dCTP</name>
        <dbReference type="ChEBI" id="CHEBI:61481"/>
    </ligand>
</feature>
<feature type="binding site" evidence="1">
    <location>
        <position position="154"/>
    </location>
    <ligand>
        <name>dCTP</name>
        <dbReference type="ChEBI" id="CHEBI:61481"/>
    </ligand>
</feature>
<feature type="binding site" evidence="1">
    <location>
        <position position="168"/>
    </location>
    <ligand>
        <name>dCTP</name>
        <dbReference type="ChEBI" id="CHEBI:61481"/>
    </ligand>
</feature>
<feature type="binding site" evidence="1">
    <location>
        <position position="178"/>
    </location>
    <ligand>
        <name>dCTP</name>
        <dbReference type="ChEBI" id="CHEBI:61481"/>
    </ligand>
</feature>
<dbReference type="EC" id="3.5.4.13" evidence="1"/>
<dbReference type="EMBL" id="CP001217">
    <property type="protein sequence ID" value="ACJ08201.1"/>
    <property type="molecule type" value="Genomic_DNA"/>
</dbReference>
<dbReference type="SMR" id="B6JMS3"/>
<dbReference type="KEGG" id="hpp:HPP12_1049"/>
<dbReference type="HOGENOM" id="CLU_087476_4_0_7"/>
<dbReference type="UniPathway" id="UPA00610">
    <property type="reaction ID" value="UER00665"/>
</dbReference>
<dbReference type="Proteomes" id="UP000008198">
    <property type="component" value="Chromosome"/>
</dbReference>
<dbReference type="GO" id="GO:0008829">
    <property type="term" value="F:dCTP deaminase activity"/>
    <property type="evidence" value="ECO:0007669"/>
    <property type="project" value="UniProtKB-UniRule"/>
</dbReference>
<dbReference type="GO" id="GO:0000166">
    <property type="term" value="F:nucleotide binding"/>
    <property type="evidence" value="ECO:0007669"/>
    <property type="project" value="UniProtKB-KW"/>
</dbReference>
<dbReference type="GO" id="GO:0006226">
    <property type="term" value="P:dUMP biosynthetic process"/>
    <property type="evidence" value="ECO:0007669"/>
    <property type="project" value="UniProtKB-UniPathway"/>
</dbReference>
<dbReference type="GO" id="GO:0006229">
    <property type="term" value="P:dUTP biosynthetic process"/>
    <property type="evidence" value="ECO:0007669"/>
    <property type="project" value="UniProtKB-UniRule"/>
</dbReference>
<dbReference type="GO" id="GO:0015949">
    <property type="term" value="P:nucleobase-containing small molecule interconversion"/>
    <property type="evidence" value="ECO:0007669"/>
    <property type="project" value="TreeGrafter"/>
</dbReference>
<dbReference type="CDD" id="cd07557">
    <property type="entry name" value="trimeric_dUTPase"/>
    <property type="match status" value="1"/>
</dbReference>
<dbReference type="FunFam" id="2.70.40.10:FF:000006">
    <property type="entry name" value="dCTP deaminase"/>
    <property type="match status" value="1"/>
</dbReference>
<dbReference type="Gene3D" id="2.70.40.10">
    <property type="match status" value="1"/>
</dbReference>
<dbReference type="HAMAP" id="MF_00146">
    <property type="entry name" value="dCTP_deaminase"/>
    <property type="match status" value="1"/>
</dbReference>
<dbReference type="InterPro" id="IPR011962">
    <property type="entry name" value="dCTP_deaminase"/>
</dbReference>
<dbReference type="InterPro" id="IPR036157">
    <property type="entry name" value="dUTPase-like_sf"/>
</dbReference>
<dbReference type="InterPro" id="IPR033704">
    <property type="entry name" value="dUTPase_trimeric"/>
</dbReference>
<dbReference type="NCBIfam" id="TIGR02274">
    <property type="entry name" value="dCTP_deam"/>
    <property type="match status" value="1"/>
</dbReference>
<dbReference type="PANTHER" id="PTHR42680">
    <property type="entry name" value="DCTP DEAMINASE"/>
    <property type="match status" value="1"/>
</dbReference>
<dbReference type="PANTHER" id="PTHR42680:SF3">
    <property type="entry name" value="DCTP DEAMINASE"/>
    <property type="match status" value="1"/>
</dbReference>
<dbReference type="Pfam" id="PF22769">
    <property type="entry name" value="DCD"/>
    <property type="match status" value="1"/>
</dbReference>
<dbReference type="SUPFAM" id="SSF51283">
    <property type="entry name" value="dUTPase-like"/>
    <property type="match status" value="1"/>
</dbReference>
<gene>
    <name evidence="1" type="primary">dcd</name>
    <name type="ordered locus">HPP12_1049</name>
</gene>
<reference key="1">
    <citation type="submission" date="2008-10" db="EMBL/GenBank/DDBJ databases">
        <title>The complete genome sequence of Helicobacter pylori strain P12.</title>
        <authorList>
            <person name="Fischer W."/>
            <person name="Windhager L."/>
            <person name="Karnholz A."/>
            <person name="Zeiller M."/>
            <person name="Zimmer R."/>
            <person name="Haas R."/>
        </authorList>
    </citation>
    <scope>NUCLEOTIDE SEQUENCE [LARGE SCALE GENOMIC DNA]</scope>
    <source>
        <strain>P12</strain>
    </source>
</reference>
<evidence type="ECO:0000255" key="1">
    <source>
        <dbReference type="HAMAP-Rule" id="MF_00146"/>
    </source>
</evidence>
<keyword id="KW-0378">Hydrolase</keyword>
<keyword id="KW-0546">Nucleotide metabolism</keyword>
<keyword id="KW-0547">Nucleotide-binding</keyword>
<accession>B6JMS3</accession>